<feature type="chain" id="PRO_1000191111" description="Multidrug resistance protein MdtK">
    <location>
        <begin position="1"/>
        <end position="457"/>
    </location>
</feature>
<feature type="transmembrane region" description="Helical" evidence="1">
    <location>
        <begin position="11"/>
        <end position="31"/>
    </location>
</feature>
<feature type="transmembrane region" description="Helical" evidence="1">
    <location>
        <begin position="46"/>
        <end position="66"/>
    </location>
</feature>
<feature type="transmembrane region" description="Helical" evidence="1">
    <location>
        <begin position="93"/>
        <end position="113"/>
    </location>
</feature>
<feature type="transmembrane region" description="Helical" evidence="1">
    <location>
        <begin position="127"/>
        <end position="147"/>
    </location>
</feature>
<feature type="transmembrane region" description="Helical" evidence="1">
    <location>
        <begin position="160"/>
        <end position="180"/>
    </location>
</feature>
<feature type="transmembrane region" description="Helical" evidence="1">
    <location>
        <begin position="188"/>
        <end position="208"/>
    </location>
</feature>
<feature type="transmembrane region" description="Helical" evidence="1">
    <location>
        <begin position="243"/>
        <end position="263"/>
    </location>
</feature>
<feature type="transmembrane region" description="Helical" evidence="1">
    <location>
        <begin position="283"/>
        <end position="301"/>
    </location>
</feature>
<feature type="transmembrane region" description="Helical" evidence="1">
    <location>
        <begin position="316"/>
        <end position="336"/>
    </location>
</feature>
<feature type="transmembrane region" description="Helical" evidence="1">
    <location>
        <begin position="357"/>
        <end position="377"/>
    </location>
</feature>
<feature type="transmembrane region" description="Helical" evidence="1">
    <location>
        <begin position="387"/>
        <end position="407"/>
    </location>
</feature>
<feature type="transmembrane region" description="Helical" evidence="1">
    <location>
        <begin position="418"/>
        <end position="438"/>
    </location>
</feature>
<dbReference type="EMBL" id="CP000950">
    <property type="protein sequence ID" value="ACA68147.1"/>
    <property type="molecule type" value="Genomic_DNA"/>
</dbReference>
<dbReference type="RefSeq" id="WP_002210937.1">
    <property type="nucleotide sequence ID" value="NZ_CP009792.1"/>
</dbReference>
<dbReference type="SMR" id="B1JJ53"/>
<dbReference type="KEGG" id="ypy:YPK_1856"/>
<dbReference type="PATRIC" id="fig|502800.11.peg.2526"/>
<dbReference type="GO" id="GO:0005886">
    <property type="term" value="C:plasma membrane"/>
    <property type="evidence" value="ECO:0007669"/>
    <property type="project" value="UniProtKB-SubCell"/>
</dbReference>
<dbReference type="GO" id="GO:0015297">
    <property type="term" value="F:antiporter activity"/>
    <property type="evidence" value="ECO:0007669"/>
    <property type="project" value="UniProtKB-UniRule"/>
</dbReference>
<dbReference type="GO" id="GO:0042910">
    <property type="term" value="F:xenobiotic transmembrane transporter activity"/>
    <property type="evidence" value="ECO:0007669"/>
    <property type="project" value="UniProtKB-UniRule"/>
</dbReference>
<dbReference type="GO" id="GO:0006814">
    <property type="term" value="P:sodium ion transport"/>
    <property type="evidence" value="ECO:0007669"/>
    <property type="project" value="UniProtKB-UniRule"/>
</dbReference>
<dbReference type="GO" id="GO:0006855">
    <property type="term" value="P:xenobiotic transmembrane transport"/>
    <property type="evidence" value="ECO:0007669"/>
    <property type="project" value="UniProtKB-UniRule"/>
</dbReference>
<dbReference type="CDD" id="cd13131">
    <property type="entry name" value="MATE_NorM_like"/>
    <property type="match status" value="1"/>
</dbReference>
<dbReference type="HAMAP" id="MF_00400">
    <property type="entry name" value="MdtK"/>
    <property type="match status" value="1"/>
</dbReference>
<dbReference type="InterPro" id="IPR002528">
    <property type="entry name" value="MATE_fam"/>
</dbReference>
<dbReference type="InterPro" id="IPR050222">
    <property type="entry name" value="MATE_MdtK"/>
</dbReference>
<dbReference type="InterPro" id="IPR048279">
    <property type="entry name" value="MdtK-like"/>
</dbReference>
<dbReference type="InterPro" id="IPR022913">
    <property type="entry name" value="Multidrug-R_MdtK"/>
</dbReference>
<dbReference type="NCBIfam" id="TIGR00797">
    <property type="entry name" value="matE"/>
    <property type="match status" value="1"/>
</dbReference>
<dbReference type="PANTHER" id="PTHR43298:SF2">
    <property type="entry name" value="FMN_FAD EXPORTER YEEO-RELATED"/>
    <property type="match status" value="1"/>
</dbReference>
<dbReference type="PANTHER" id="PTHR43298">
    <property type="entry name" value="MULTIDRUG RESISTANCE PROTEIN NORM-RELATED"/>
    <property type="match status" value="1"/>
</dbReference>
<dbReference type="Pfam" id="PF01554">
    <property type="entry name" value="MatE"/>
    <property type="match status" value="2"/>
</dbReference>
<dbReference type="PIRSF" id="PIRSF006603">
    <property type="entry name" value="DinF"/>
    <property type="match status" value="1"/>
</dbReference>
<gene>
    <name evidence="1" type="primary">mdtK</name>
    <name type="ordered locus">YPK_1856</name>
</gene>
<sequence length="457" mass="49401">MQKYIVEARSLLALAIPVVIAQLSQTAMGVVDTIMAGSVSATDMAAVAVGTSIWLPAILFGHGLLLALTPTVAQLNGSGRRSQIAHQVRQGFWLALCVSVLIMLVLYNSDHVIKQMDNIDPVLAQKAVGFLHAIMWGVPGYLFFQVLRNQCEGLSKTKPGMVIGFVGLLVNIPINYIFIYGKFGAPALGGVGCGVATASVYWVMFLMMRWYVTRARSQQDIKLEKGFAAPDWQVMKRLSGLGLPVALALFFEVTLFAVVALLVSPLGIVAVAGHQIALNFSSLMFMLPMSLSVAATIRVGFRLGQGAVEQAQVAAYTSMAVGLLLASVTAVFTIVFREHIALLYNKTPEVVTMASHLMLLAALYQLSDAVQVIGSGVLRGYKDTRSIFFITFTAYWLLGLPSGYLLGLTDYILPAMGPAGFWIGFIIGLTAAAILMVLRIRWLQKQPTAFILQRAAH</sequence>
<organism>
    <name type="scientific">Yersinia pseudotuberculosis serotype O:3 (strain YPIII)</name>
    <dbReference type="NCBI Taxonomy" id="502800"/>
    <lineage>
        <taxon>Bacteria</taxon>
        <taxon>Pseudomonadati</taxon>
        <taxon>Pseudomonadota</taxon>
        <taxon>Gammaproteobacteria</taxon>
        <taxon>Enterobacterales</taxon>
        <taxon>Yersiniaceae</taxon>
        <taxon>Yersinia</taxon>
    </lineage>
</organism>
<protein>
    <recommendedName>
        <fullName evidence="1">Multidrug resistance protein MdtK</fullName>
    </recommendedName>
    <alternativeName>
        <fullName evidence="1">Multidrug-efflux transporter</fullName>
    </alternativeName>
</protein>
<accession>B1JJ53</accession>
<keyword id="KW-0050">Antiport</keyword>
<keyword id="KW-0997">Cell inner membrane</keyword>
<keyword id="KW-1003">Cell membrane</keyword>
<keyword id="KW-0406">Ion transport</keyword>
<keyword id="KW-0472">Membrane</keyword>
<keyword id="KW-0915">Sodium</keyword>
<keyword id="KW-0739">Sodium transport</keyword>
<keyword id="KW-0812">Transmembrane</keyword>
<keyword id="KW-1133">Transmembrane helix</keyword>
<keyword id="KW-0813">Transport</keyword>
<proteinExistence type="inferred from homology"/>
<evidence type="ECO:0000255" key="1">
    <source>
        <dbReference type="HAMAP-Rule" id="MF_00400"/>
    </source>
</evidence>
<comment type="function">
    <text evidence="1">Multidrug efflux pump that functions probably as a Na(+)/drug antiporter.</text>
</comment>
<comment type="subcellular location">
    <subcellularLocation>
        <location evidence="1">Cell inner membrane</location>
        <topology evidence="1">Multi-pass membrane protein</topology>
    </subcellularLocation>
</comment>
<comment type="similarity">
    <text evidence="1">Belongs to the multi antimicrobial extrusion (MATE) (TC 2.A.66.1) family. MdtK subfamily.</text>
</comment>
<name>MDTK_YERPY</name>
<reference key="1">
    <citation type="submission" date="2008-02" db="EMBL/GenBank/DDBJ databases">
        <title>Complete sequence of Yersinia pseudotuberculosis YPIII.</title>
        <authorList>
            <consortium name="US DOE Joint Genome Institute"/>
            <person name="Copeland A."/>
            <person name="Lucas S."/>
            <person name="Lapidus A."/>
            <person name="Glavina del Rio T."/>
            <person name="Dalin E."/>
            <person name="Tice H."/>
            <person name="Bruce D."/>
            <person name="Goodwin L."/>
            <person name="Pitluck S."/>
            <person name="Munk A.C."/>
            <person name="Brettin T."/>
            <person name="Detter J.C."/>
            <person name="Han C."/>
            <person name="Tapia R."/>
            <person name="Schmutz J."/>
            <person name="Larimer F."/>
            <person name="Land M."/>
            <person name="Hauser L."/>
            <person name="Challacombe J.F."/>
            <person name="Green L."/>
            <person name="Lindler L.E."/>
            <person name="Nikolich M.P."/>
            <person name="Richardson P."/>
        </authorList>
    </citation>
    <scope>NUCLEOTIDE SEQUENCE [LARGE SCALE GENOMIC DNA]</scope>
    <source>
        <strain>YPIII</strain>
    </source>
</reference>